<dbReference type="EC" id="3.1.11.6" evidence="1"/>
<dbReference type="EMBL" id="CP001649">
    <property type="protein sequence ID" value="ACS78804.1"/>
    <property type="molecule type" value="Genomic_DNA"/>
</dbReference>
<dbReference type="RefSeq" id="WP_015850623.1">
    <property type="nucleotide sequence ID" value="NC_012881.1"/>
</dbReference>
<dbReference type="SMR" id="C6BYY0"/>
<dbReference type="STRING" id="526222.Desal_0738"/>
<dbReference type="KEGG" id="dsa:Desal_0738"/>
<dbReference type="eggNOG" id="COG1722">
    <property type="taxonomic scope" value="Bacteria"/>
</dbReference>
<dbReference type="HOGENOM" id="CLU_145918_2_2_7"/>
<dbReference type="OrthoDB" id="5340035at2"/>
<dbReference type="Proteomes" id="UP000002601">
    <property type="component" value="Chromosome"/>
</dbReference>
<dbReference type="GO" id="GO:0005829">
    <property type="term" value="C:cytosol"/>
    <property type="evidence" value="ECO:0007669"/>
    <property type="project" value="TreeGrafter"/>
</dbReference>
<dbReference type="GO" id="GO:0009318">
    <property type="term" value="C:exodeoxyribonuclease VII complex"/>
    <property type="evidence" value="ECO:0007669"/>
    <property type="project" value="InterPro"/>
</dbReference>
<dbReference type="GO" id="GO:0008855">
    <property type="term" value="F:exodeoxyribonuclease VII activity"/>
    <property type="evidence" value="ECO:0007669"/>
    <property type="project" value="UniProtKB-UniRule"/>
</dbReference>
<dbReference type="GO" id="GO:0006308">
    <property type="term" value="P:DNA catabolic process"/>
    <property type="evidence" value="ECO:0007669"/>
    <property type="project" value="UniProtKB-UniRule"/>
</dbReference>
<dbReference type="Gene3D" id="1.10.287.1040">
    <property type="entry name" value="Exonuclease VII, small subunit"/>
    <property type="match status" value="1"/>
</dbReference>
<dbReference type="HAMAP" id="MF_00337">
    <property type="entry name" value="Exonuc_7_S"/>
    <property type="match status" value="1"/>
</dbReference>
<dbReference type="InterPro" id="IPR003761">
    <property type="entry name" value="Exonuc_VII_S"/>
</dbReference>
<dbReference type="InterPro" id="IPR037004">
    <property type="entry name" value="Exonuc_VII_ssu_sf"/>
</dbReference>
<dbReference type="NCBIfam" id="NF010670">
    <property type="entry name" value="PRK14067.1"/>
    <property type="match status" value="1"/>
</dbReference>
<dbReference type="NCBIfam" id="TIGR01280">
    <property type="entry name" value="xseB"/>
    <property type="match status" value="1"/>
</dbReference>
<dbReference type="PANTHER" id="PTHR34137">
    <property type="entry name" value="EXODEOXYRIBONUCLEASE 7 SMALL SUBUNIT"/>
    <property type="match status" value="1"/>
</dbReference>
<dbReference type="PANTHER" id="PTHR34137:SF1">
    <property type="entry name" value="EXODEOXYRIBONUCLEASE 7 SMALL SUBUNIT"/>
    <property type="match status" value="1"/>
</dbReference>
<dbReference type="Pfam" id="PF02609">
    <property type="entry name" value="Exonuc_VII_S"/>
    <property type="match status" value="1"/>
</dbReference>
<dbReference type="PIRSF" id="PIRSF006488">
    <property type="entry name" value="Exonuc_VII_S"/>
    <property type="match status" value="1"/>
</dbReference>
<dbReference type="SUPFAM" id="SSF116842">
    <property type="entry name" value="XseB-like"/>
    <property type="match status" value="1"/>
</dbReference>
<protein>
    <recommendedName>
        <fullName evidence="1">Exodeoxyribonuclease 7 small subunit</fullName>
        <ecNumber evidence="1">3.1.11.6</ecNumber>
    </recommendedName>
    <alternativeName>
        <fullName evidence="1">Exodeoxyribonuclease VII small subunit</fullName>
        <shortName evidence="1">Exonuclease VII small subunit</shortName>
    </alternativeName>
</protein>
<sequence length="80" mass="8877">MTKDNKTFEDRLDRLKAIVSALEKGDLPLEEGVALFKEGQTLSKECATQLEKARNEVKIVTGGEVEDFDVDTEEDTADDS</sequence>
<gene>
    <name evidence="1" type="primary">xseB</name>
    <name type="ordered locus">Desal_0738</name>
</gene>
<proteinExistence type="inferred from homology"/>
<organism>
    <name type="scientific">Maridesulfovibrio salexigens (strain ATCC 14822 / DSM 2638 / NCIMB 8403 / VKM B-1763)</name>
    <name type="common">Desulfovibrio salexigens</name>
    <dbReference type="NCBI Taxonomy" id="526222"/>
    <lineage>
        <taxon>Bacteria</taxon>
        <taxon>Pseudomonadati</taxon>
        <taxon>Thermodesulfobacteriota</taxon>
        <taxon>Desulfovibrionia</taxon>
        <taxon>Desulfovibrionales</taxon>
        <taxon>Desulfovibrionaceae</taxon>
        <taxon>Maridesulfovibrio</taxon>
    </lineage>
</organism>
<reference key="1">
    <citation type="submission" date="2009-06" db="EMBL/GenBank/DDBJ databases">
        <title>Complete sequence of Desulfovibrio salexigens DSM 2638.</title>
        <authorList>
            <consortium name="US DOE Joint Genome Institute"/>
            <person name="Lucas S."/>
            <person name="Copeland A."/>
            <person name="Lapidus A."/>
            <person name="Glavina del Rio T."/>
            <person name="Tice H."/>
            <person name="Bruce D."/>
            <person name="Goodwin L."/>
            <person name="Pitluck S."/>
            <person name="Munk A.C."/>
            <person name="Brettin T."/>
            <person name="Detter J.C."/>
            <person name="Han C."/>
            <person name="Tapia R."/>
            <person name="Larimer F."/>
            <person name="Land M."/>
            <person name="Hauser L."/>
            <person name="Kyrpides N."/>
            <person name="Anderson I."/>
            <person name="Wall J.D."/>
            <person name="Arkin A.P."/>
            <person name="Dehal P."/>
            <person name="Chivian D."/>
            <person name="Giles B."/>
            <person name="Hazen T.C."/>
        </authorList>
    </citation>
    <scope>NUCLEOTIDE SEQUENCE [LARGE SCALE GENOMIC DNA]</scope>
    <source>
        <strain>ATCC 14822 / DSM 2638 / NCIMB 8403 / VKM B-1763</strain>
    </source>
</reference>
<feature type="chain" id="PRO_1000205219" description="Exodeoxyribonuclease 7 small subunit">
    <location>
        <begin position="1"/>
        <end position="80"/>
    </location>
</feature>
<name>EX7S_MARSD</name>
<comment type="function">
    <text evidence="1">Bidirectionally degrades single-stranded DNA into large acid-insoluble oligonucleotides, which are then degraded further into small acid-soluble oligonucleotides.</text>
</comment>
<comment type="catalytic activity">
    <reaction evidence="1">
        <text>Exonucleolytic cleavage in either 5'- to 3'- or 3'- to 5'-direction to yield nucleoside 5'-phosphates.</text>
        <dbReference type="EC" id="3.1.11.6"/>
    </reaction>
</comment>
<comment type="subunit">
    <text evidence="1">Heterooligomer composed of large and small subunits.</text>
</comment>
<comment type="subcellular location">
    <subcellularLocation>
        <location evidence="1">Cytoplasm</location>
    </subcellularLocation>
</comment>
<comment type="similarity">
    <text evidence="1">Belongs to the XseB family.</text>
</comment>
<keyword id="KW-0963">Cytoplasm</keyword>
<keyword id="KW-0269">Exonuclease</keyword>
<keyword id="KW-0378">Hydrolase</keyword>
<keyword id="KW-0540">Nuclease</keyword>
<keyword id="KW-1185">Reference proteome</keyword>
<evidence type="ECO:0000255" key="1">
    <source>
        <dbReference type="HAMAP-Rule" id="MF_00337"/>
    </source>
</evidence>
<accession>C6BYY0</accession>